<gene>
    <name type="primary">ycf80</name>
</gene>
<proteinExistence type="inferred from homology"/>
<organism>
    <name type="scientific">Guillardia theta</name>
    <name type="common">Cryptophyte</name>
    <name type="synonym">Cryptomonas phi</name>
    <dbReference type="NCBI Taxonomy" id="55529"/>
    <lineage>
        <taxon>Eukaryota</taxon>
        <taxon>Cryptophyceae</taxon>
        <taxon>Pyrenomonadales</taxon>
        <taxon>Geminigeraceae</taxon>
        <taxon>Guillardia</taxon>
    </lineage>
</organism>
<dbReference type="EMBL" id="AF041468">
    <property type="protein sequence ID" value="AAC35638.1"/>
    <property type="molecule type" value="Genomic_DNA"/>
</dbReference>
<dbReference type="RefSeq" id="NP_050704.1">
    <property type="nucleotide sequence ID" value="NC_000926.1"/>
</dbReference>
<dbReference type="HOGENOM" id="CLU_988500_0_0_1"/>
<dbReference type="GO" id="GO:0009507">
    <property type="term" value="C:chloroplast"/>
    <property type="evidence" value="ECO:0007669"/>
    <property type="project" value="UniProtKB-SubCell"/>
</dbReference>
<dbReference type="GO" id="GO:0015031">
    <property type="term" value="P:protein transport"/>
    <property type="evidence" value="ECO:0007669"/>
    <property type="project" value="InterPro"/>
</dbReference>
<dbReference type="Gene3D" id="3.40.1350.100">
    <property type="match status" value="1"/>
</dbReference>
<dbReference type="InterPro" id="IPR007378">
    <property type="entry name" value="Tic22-like"/>
</dbReference>
<dbReference type="PANTHER" id="PTHR33926">
    <property type="entry name" value="PROTEIN TIC 22, CHLOROPLASTIC"/>
    <property type="match status" value="1"/>
</dbReference>
<dbReference type="PANTHER" id="PTHR33926:SF4">
    <property type="entry name" value="PROTEIN TIC 22, CHLOROPLASTIC"/>
    <property type="match status" value="1"/>
</dbReference>
<dbReference type="Pfam" id="PF04278">
    <property type="entry name" value="Tic22"/>
    <property type="match status" value="1"/>
</dbReference>
<feature type="chain" id="PRO_0000217406" description="Uncharacterized protein ycf80">
    <location>
        <begin position="1"/>
        <end position="282"/>
    </location>
</feature>
<sequence length="282" mass="33221">MISNFNLSYSLKHVSSCFIFSDNNDPINKLINSLNSNLNLKVRLPSDYNLLADEFLPPNQSVLIDFKDIDDNWFSKAKHLPSLFSNRRSPYFPTLAQKHILESLKTVPVYTIVNDLNEIVIASPRDLTNFNSFNWVKRFYNDWFIWEKDEGNVNIGLFFMNREDAELYLHQICLKDPRGVENVGVNVKTISLDTFYKLNRLSPPRLQFKLIADLQEIKNILNVNSNSRVSFHPKQKYDKNWFKGIPIFIYSPTVTNLDWTLKSNKNMIFFQEMMHIMFQKIY</sequence>
<accession>O78449</accession>
<protein>
    <recommendedName>
        <fullName>Uncharacterized protein ycf80</fullName>
    </recommendedName>
</protein>
<geneLocation type="chloroplast"/>
<name>YCF80_GUITH</name>
<evidence type="ECO:0000305" key="1"/>
<keyword id="KW-0150">Chloroplast</keyword>
<keyword id="KW-0934">Plastid</keyword>
<comment type="subcellular location">
    <subcellularLocation>
        <location>Plastid</location>
        <location>Chloroplast</location>
    </subcellularLocation>
</comment>
<comment type="similarity">
    <text evidence="1">Belongs to the ycf80 family.</text>
</comment>
<reference key="1">
    <citation type="journal article" date="1999" name="J. Mol. Evol.">
        <title>The plastid genome of the cryptophyte alga, Guillardia theta: complete sequence and conserved synteny groups confirm its common ancestry with red algae.</title>
        <authorList>
            <person name="Douglas S.E."/>
            <person name="Penny S.L."/>
        </authorList>
    </citation>
    <scope>NUCLEOTIDE SEQUENCE [LARGE SCALE GENOMIC DNA]</scope>
</reference>